<reference key="1">
    <citation type="journal article" date="2005" name="PLoS Biol.">
        <title>The genomes of Oryza sativa: a history of duplications.</title>
        <authorList>
            <person name="Yu J."/>
            <person name="Wang J."/>
            <person name="Lin W."/>
            <person name="Li S."/>
            <person name="Li H."/>
            <person name="Zhou J."/>
            <person name="Ni P."/>
            <person name="Dong W."/>
            <person name="Hu S."/>
            <person name="Zeng C."/>
            <person name="Zhang J."/>
            <person name="Zhang Y."/>
            <person name="Li R."/>
            <person name="Xu Z."/>
            <person name="Li S."/>
            <person name="Li X."/>
            <person name="Zheng H."/>
            <person name="Cong L."/>
            <person name="Lin L."/>
            <person name="Yin J."/>
            <person name="Geng J."/>
            <person name="Li G."/>
            <person name="Shi J."/>
            <person name="Liu J."/>
            <person name="Lv H."/>
            <person name="Li J."/>
            <person name="Wang J."/>
            <person name="Deng Y."/>
            <person name="Ran L."/>
            <person name="Shi X."/>
            <person name="Wang X."/>
            <person name="Wu Q."/>
            <person name="Li C."/>
            <person name="Ren X."/>
            <person name="Wang J."/>
            <person name="Wang X."/>
            <person name="Li D."/>
            <person name="Liu D."/>
            <person name="Zhang X."/>
            <person name="Ji Z."/>
            <person name="Zhao W."/>
            <person name="Sun Y."/>
            <person name="Zhang Z."/>
            <person name="Bao J."/>
            <person name="Han Y."/>
            <person name="Dong L."/>
            <person name="Ji J."/>
            <person name="Chen P."/>
            <person name="Wu S."/>
            <person name="Liu J."/>
            <person name="Xiao Y."/>
            <person name="Bu D."/>
            <person name="Tan J."/>
            <person name="Yang L."/>
            <person name="Ye C."/>
            <person name="Zhang J."/>
            <person name="Xu J."/>
            <person name="Zhou Y."/>
            <person name="Yu Y."/>
            <person name="Zhang B."/>
            <person name="Zhuang S."/>
            <person name="Wei H."/>
            <person name="Liu B."/>
            <person name="Lei M."/>
            <person name="Yu H."/>
            <person name="Li Y."/>
            <person name="Xu H."/>
            <person name="Wei S."/>
            <person name="He X."/>
            <person name="Fang L."/>
            <person name="Zhang Z."/>
            <person name="Zhang Y."/>
            <person name="Huang X."/>
            <person name="Su Z."/>
            <person name="Tong W."/>
            <person name="Li J."/>
            <person name="Tong Z."/>
            <person name="Li S."/>
            <person name="Ye J."/>
            <person name="Wang L."/>
            <person name="Fang L."/>
            <person name="Lei T."/>
            <person name="Chen C.-S."/>
            <person name="Chen H.-C."/>
            <person name="Xu Z."/>
            <person name="Li H."/>
            <person name="Huang H."/>
            <person name="Zhang F."/>
            <person name="Xu H."/>
            <person name="Li N."/>
            <person name="Zhao C."/>
            <person name="Li S."/>
            <person name="Dong L."/>
            <person name="Huang Y."/>
            <person name="Li L."/>
            <person name="Xi Y."/>
            <person name="Qi Q."/>
            <person name="Li W."/>
            <person name="Zhang B."/>
            <person name="Hu W."/>
            <person name="Zhang Y."/>
            <person name="Tian X."/>
            <person name="Jiao Y."/>
            <person name="Liang X."/>
            <person name="Jin J."/>
            <person name="Gao L."/>
            <person name="Zheng W."/>
            <person name="Hao B."/>
            <person name="Liu S.-M."/>
            <person name="Wang W."/>
            <person name="Yuan L."/>
            <person name="Cao M."/>
            <person name="McDermott J."/>
            <person name="Samudrala R."/>
            <person name="Wang J."/>
            <person name="Wong G.K.-S."/>
            <person name="Yang H."/>
        </authorList>
    </citation>
    <scope>NUCLEOTIDE SEQUENCE [LARGE SCALE GENOMIC DNA]</scope>
    <source>
        <strain>cv. 93-11</strain>
    </source>
</reference>
<gene>
    <name type="primary">H2B.8</name>
    <name type="ORF">OsI_000418</name>
</gene>
<feature type="initiator methionine" description="Removed" evidence="1">
    <location>
        <position position="1"/>
    </location>
</feature>
<feature type="chain" id="PRO_0000294190" description="Histone H2B.8">
    <location>
        <begin position="2"/>
        <end position="153"/>
    </location>
</feature>
<feature type="region of interest" description="Disordered" evidence="2">
    <location>
        <begin position="1"/>
        <end position="61"/>
    </location>
</feature>
<feature type="compositionally biased region" description="Basic and acidic residues" evidence="2">
    <location>
        <begin position="1"/>
        <end position="28"/>
    </location>
</feature>
<feature type="compositionally biased region" description="Basic and acidic residues" evidence="2">
    <location>
        <begin position="36"/>
        <end position="53"/>
    </location>
</feature>
<feature type="modified residue" description="N6-acetyllysine" evidence="1">
    <location>
        <position position="7"/>
    </location>
</feature>
<feature type="modified residue" description="N6-acetyllysine" evidence="1">
    <location>
        <position position="37"/>
    </location>
</feature>
<feature type="cross-link" description="Glycyl lysine isopeptide (Lys-Gly) (interchain with G-Cter in ubiquitin)" evidence="1">
    <location>
        <position position="149"/>
    </location>
</feature>
<sequence length="153" mass="16488">MAPKAEKKPAAKKPAEEEPAAEKAEKAPAGKKPKAEKRLPAGKGEKGSGEGKKAGRKKAKKSVETYKIYIFKVLKQVHPDIGISSKAMSIMNSFINDIFEKLAGESAKLARYNKKPTITSREIQTAVRLVLPGELAKHAVSEGTKAVTKFTSS</sequence>
<comment type="function">
    <text>Core component of nucleosome. Nucleosomes wrap and compact DNA into chromatin, limiting DNA accessibility to the cellular machineries which require DNA as a template. Histones thereby play a central role in transcription regulation, DNA repair, DNA replication and chromosomal stability. DNA accessibility is regulated via a complex set of post-translational modifications of histones, also called histone code, and nucleosome remodeling.</text>
</comment>
<comment type="subunit">
    <text>The nucleosome is a histone octamer containing two molecules each of H2A, H2B, H3 and H4 assembled in one H3-H4 heterotetramer and two H2A-H2B heterodimers. The octamer wraps approximately 147 bp of DNA.</text>
</comment>
<comment type="subcellular location">
    <subcellularLocation>
        <location evidence="1">Nucleus</location>
    </subcellularLocation>
    <subcellularLocation>
        <location evidence="1">Chromosome</location>
    </subcellularLocation>
</comment>
<comment type="PTM">
    <text evidence="1">Can be acetylated to form H2BK6ac and H2BK33ac.</text>
</comment>
<comment type="PTM">
    <text evidence="1">Monoubiquitinated by BRE1 to form H2BK143ub1 and deubiquitinated by UBP26. Required for heterochromatic histone H3 di- and trimethylation at H3K4me. May give a specific tag for epigenetic transcriptional activation (By similarity).</text>
</comment>
<comment type="similarity">
    <text evidence="3">Belongs to the histone H2B family.</text>
</comment>
<comment type="caution">
    <text evidence="3">To ensure consistency between histone entries, we follow the 'Brno' nomenclature for histone modifications, with positions referring to those used in the literature for the 'closest' model organism. Due to slight variations in histone sequences between organisms and to the presence of initiator methionine in UniProtKB/Swiss-Prot sequences, the actual positions of modified amino acids in the sequence generally differ. In this entry the following conventions are used: H2BK6ac = acetylated Lys-7; H2BK33ac = acetylated Lys-37; H2BK143ub1 = monoubiquitinated Lys-149.</text>
</comment>
<protein>
    <recommendedName>
        <fullName>Histone H2B.8</fullName>
    </recommendedName>
</protein>
<organism>
    <name type="scientific">Oryza sativa subsp. indica</name>
    <name type="common">Rice</name>
    <dbReference type="NCBI Taxonomy" id="39946"/>
    <lineage>
        <taxon>Eukaryota</taxon>
        <taxon>Viridiplantae</taxon>
        <taxon>Streptophyta</taxon>
        <taxon>Embryophyta</taxon>
        <taxon>Tracheophyta</taxon>
        <taxon>Spermatophyta</taxon>
        <taxon>Magnoliopsida</taxon>
        <taxon>Liliopsida</taxon>
        <taxon>Poales</taxon>
        <taxon>Poaceae</taxon>
        <taxon>BOP clade</taxon>
        <taxon>Oryzoideae</taxon>
        <taxon>Oryzeae</taxon>
        <taxon>Oryzinae</taxon>
        <taxon>Oryza</taxon>
        <taxon>Oryza sativa</taxon>
    </lineage>
</organism>
<evidence type="ECO:0000250" key="1"/>
<evidence type="ECO:0000256" key="2">
    <source>
        <dbReference type="SAM" id="MobiDB-lite"/>
    </source>
</evidence>
<evidence type="ECO:0000305" key="3"/>
<proteinExistence type="inferred from homology"/>
<keyword id="KW-0007">Acetylation</keyword>
<keyword id="KW-0158">Chromosome</keyword>
<keyword id="KW-0238">DNA-binding</keyword>
<keyword id="KW-1017">Isopeptide bond</keyword>
<keyword id="KW-0544">Nucleosome core</keyword>
<keyword id="KW-0539">Nucleus</keyword>
<keyword id="KW-1185">Reference proteome</keyword>
<keyword id="KW-0832">Ubl conjugation</keyword>
<dbReference type="EMBL" id="CM000126">
    <property type="protein sequence ID" value="EAY72571.1"/>
    <property type="molecule type" value="Genomic_DNA"/>
</dbReference>
<dbReference type="SMR" id="A2WKS5"/>
<dbReference type="STRING" id="39946.A2WKS5"/>
<dbReference type="EnsemblPlants" id="BGIOSGA002380-TA">
    <property type="protein sequence ID" value="BGIOSGA002380-PA"/>
    <property type="gene ID" value="BGIOSGA002380"/>
</dbReference>
<dbReference type="EnsemblPlants" id="OsIR64_01g0003650.01">
    <property type="protein sequence ID" value="OsIR64_01g0003650.01"/>
    <property type="gene ID" value="OsIR64_01g0003650"/>
</dbReference>
<dbReference type="EnsemblPlants" id="OsLiXu_01g0003700.01">
    <property type="protein sequence ID" value="OsLiXu_01g0003700.01"/>
    <property type="gene ID" value="OsLiXu_01g0003700"/>
</dbReference>
<dbReference type="EnsemblPlants" id="OsMH63_01G003790_01">
    <property type="protein sequence ID" value="OsMH63_01G003790_01"/>
    <property type="gene ID" value="OsMH63_01G003790"/>
</dbReference>
<dbReference type="EnsemblPlants" id="OsPr106_01g0003700.01">
    <property type="protein sequence ID" value="OsPr106_01g0003700.01"/>
    <property type="gene ID" value="OsPr106_01g0003700"/>
</dbReference>
<dbReference type="EnsemblPlants" id="OsZS97_01G003570_02">
    <property type="protein sequence ID" value="OsZS97_01G003570_02"/>
    <property type="gene ID" value="OsZS97_01G003570"/>
</dbReference>
<dbReference type="EnsemblPlants" id="OsZS97_01G003570_03">
    <property type="protein sequence ID" value="OsZS97_01G003570_03"/>
    <property type="gene ID" value="OsZS97_01G003570"/>
</dbReference>
<dbReference type="Gramene" id="BGIOSGA002380-TA">
    <property type="protein sequence ID" value="BGIOSGA002380-PA"/>
    <property type="gene ID" value="BGIOSGA002380"/>
</dbReference>
<dbReference type="Gramene" id="OsIR64_01g0003650.01">
    <property type="protein sequence ID" value="OsIR64_01g0003650.01"/>
    <property type="gene ID" value="OsIR64_01g0003650"/>
</dbReference>
<dbReference type="Gramene" id="OsLiXu_01g0003700.01">
    <property type="protein sequence ID" value="OsLiXu_01g0003700.01"/>
    <property type="gene ID" value="OsLiXu_01g0003700"/>
</dbReference>
<dbReference type="Gramene" id="OsMH63_01G003790_01">
    <property type="protein sequence ID" value="OsMH63_01G003790_01"/>
    <property type="gene ID" value="OsMH63_01G003790"/>
</dbReference>
<dbReference type="Gramene" id="OsPr106_01g0003700.01">
    <property type="protein sequence ID" value="OsPr106_01g0003700.01"/>
    <property type="gene ID" value="OsPr106_01g0003700"/>
</dbReference>
<dbReference type="Gramene" id="OsZS97_01G003570_02">
    <property type="protein sequence ID" value="OsZS97_01G003570_02"/>
    <property type="gene ID" value="OsZS97_01G003570"/>
</dbReference>
<dbReference type="Gramene" id="OsZS97_01G003570_03">
    <property type="protein sequence ID" value="OsZS97_01G003570_03"/>
    <property type="gene ID" value="OsZS97_01G003570"/>
</dbReference>
<dbReference type="HOGENOM" id="CLU_075666_1_0_1"/>
<dbReference type="Proteomes" id="UP000007015">
    <property type="component" value="Chromosome 1"/>
</dbReference>
<dbReference type="GO" id="GO:0000786">
    <property type="term" value="C:nucleosome"/>
    <property type="evidence" value="ECO:0007669"/>
    <property type="project" value="UniProtKB-KW"/>
</dbReference>
<dbReference type="GO" id="GO:0005634">
    <property type="term" value="C:nucleus"/>
    <property type="evidence" value="ECO:0007669"/>
    <property type="project" value="UniProtKB-SubCell"/>
</dbReference>
<dbReference type="GO" id="GO:0003677">
    <property type="term" value="F:DNA binding"/>
    <property type="evidence" value="ECO:0007669"/>
    <property type="project" value="UniProtKB-KW"/>
</dbReference>
<dbReference type="GO" id="GO:0046982">
    <property type="term" value="F:protein heterodimerization activity"/>
    <property type="evidence" value="ECO:0007669"/>
    <property type="project" value="InterPro"/>
</dbReference>
<dbReference type="GO" id="GO:0030527">
    <property type="term" value="F:structural constituent of chromatin"/>
    <property type="evidence" value="ECO:0007669"/>
    <property type="project" value="InterPro"/>
</dbReference>
<dbReference type="CDD" id="cd22910">
    <property type="entry name" value="HFD_H2B"/>
    <property type="match status" value="1"/>
</dbReference>
<dbReference type="FunFam" id="1.10.20.10:FF:000014">
    <property type="entry name" value="Histone H2B"/>
    <property type="match status" value="1"/>
</dbReference>
<dbReference type="Gene3D" id="1.10.20.10">
    <property type="entry name" value="Histone, subunit A"/>
    <property type="match status" value="1"/>
</dbReference>
<dbReference type="InterPro" id="IPR009072">
    <property type="entry name" value="Histone-fold"/>
</dbReference>
<dbReference type="InterPro" id="IPR007125">
    <property type="entry name" value="Histone_H2A/H2B/H3"/>
</dbReference>
<dbReference type="InterPro" id="IPR000558">
    <property type="entry name" value="Histone_H2B"/>
</dbReference>
<dbReference type="InterPro" id="IPR055333">
    <property type="entry name" value="HISTONE_H2B_site"/>
</dbReference>
<dbReference type="PANTHER" id="PTHR23428">
    <property type="entry name" value="HISTONE H2B"/>
    <property type="match status" value="1"/>
</dbReference>
<dbReference type="Pfam" id="PF00125">
    <property type="entry name" value="Histone"/>
    <property type="match status" value="1"/>
</dbReference>
<dbReference type="PRINTS" id="PR00621">
    <property type="entry name" value="HISTONEH2B"/>
</dbReference>
<dbReference type="SMART" id="SM00427">
    <property type="entry name" value="H2B"/>
    <property type="match status" value="1"/>
</dbReference>
<dbReference type="SUPFAM" id="SSF47113">
    <property type="entry name" value="Histone-fold"/>
    <property type="match status" value="1"/>
</dbReference>
<dbReference type="PROSITE" id="PS00357">
    <property type="entry name" value="HISTONE_H2B"/>
    <property type="match status" value="1"/>
</dbReference>
<accession>A2WKS5</accession>
<name>H2B8_ORYSI</name>